<comment type="function">
    <text evidence="1">One of two assembly initiator proteins, it binds directly to the 5'-end of the 23S rRNA, where it nucleates assembly of the 50S subunit.</text>
</comment>
<comment type="function">
    <text evidence="1">One of the proteins that surrounds the polypeptide exit tunnel on the outside of the subunit.</text>
</comment>
<comment type="subunit">
    <text evidence="1">Part of the 50S ribosomal subunit.</text>
</comment>
<comment type="similarity">
    <text evidence="1">Belongs to the universal ribosomal protein uL24 family.</text>
</comment>
<evidence type="ECO:0000255" key="1">
    <source>
        <dbReference type="HAMAP-Rule" id="MF_01326"/>
    </source>
</evidence>
<evidence type="ECO:0000305" key="2"/>
<keyword id="KW-1185">Reference proteome</keyword>
<keyword id="KW-0687">Ribonucleoprotein</keyword>
<keyword id="KW-0689">Ribosomal protein</keyword>
<keyword id="KW-0694">RNA-binding</keyword>
<keyword id="KW-0699">rRNA-binding</keyword>
<sequence>MRRIKKGDQVIVIAGKDKGKKGLVLSVLSGDKLVVEGVNLVRKHQRPNPMRGVTGGIVEKAMPIHSSNVALFNAAINKGDRVGFRLLADGRKVRFYRSTNELIDA</sequence>
<name>RL24_METCA</name>
<proteinExistence type="inferred from homology"/>
<gene>
    <name evidence="1" type="primary">rplX</name>
    <name type="ordered locus">MCA2361</name>
</gene>
<protein>
    <recommendedName>
        <fullName evidence="1">Large ribosomal subunit protein uL24</fullName>
    </recommendedName>
    <alternativeName>
        <fullName evidence="2">50S ribosomal protein L24</fullName>
    </alternativeName>
</protein>
<organism>
    <name type="scientific">Methylococcus capsulatus (strain ATCC 33009 / NCIMB 11132 / Bath)</name>
    <dbReference type="NCBI Taxonomy" id="243233"/>
    <lineage>
        <taxon>Bacteria</taxon>
        <taxon>Pseudomonadati</taxon>
        <taxon>Pseudomonadota</taxon>
        <taxon>Gammaproteobacteria</taxon>
        <taxon>Methylococcales</taxon>
        <taxon>Methylococcaceae</taxon>
        <taxon>Methylococcus</taxon>
    </lineage>
</organism>
<feature type="chain" id="PRO_0000241618" description="Large ribosomal subunit protein uL24">
    <location>
        <begin position="1"/>
        <end position="105"/>
    </location>
</feature>
<accession>Q605C3</accession>
<reference key="1">
    <citation type="journal article" date="2004" name="PLoS Biol.">
        <title>Genomic insights into methanotrophy: the complete genome sequence of Methylococcus capsulatus (Bath).</title>
        <authorList>
            <person name="Ward N.L."/>
            <person name="Larsen O."/>
            <person name="Sakwa J."/>
            <person name="Bruseth L."/>
            <person name="Khouri H.M."/>
            <person name="Durkin A.S."/>
            <person name="Dimitrov G."/>
            <person name="Jiang L."/>
            <person name="Scanlan D."/>
            <person name="Kang K.H."/>
            <person name="Lewis M.R."/>
            <person name="Nelson K.E."/>
            <person name="Methe B.A."/>
            <person name="Wu M."/>
            <person name="Heidelberg J.F."/>
            <person name="Paulsen I.T."/>
            <person name="Fouts D.E."/>
            <person name="Ravel J."/>
            <person name="Tettelin H."/>
            <person name="Ren Q."/>
            <person name="Read T.D."/>
            <person name="DeBoy R.T."/>
            <person name="Seshadri R."/>
            <person name="Salzberg S.L."/>
            <person name="Jensen H.B."/>
            <person name="Birkeland N.K."/>
            <person name="Nelson W.C."/>
            <person name="Dodson R.J."/>
            <person name="Grindhaug S.H."/>
            <person name="Holt I.E."/>
            <person name="Eidhammer I."/>
            <person name="Jonasen I."/>
            <person name="Vanaken S."/>
            <person name="Utterback T.R."/>
            <person name="Feldblyum T.V."/>
            <person name="Fraser C.M."/>
            <person name="Lillehaug J.R."/>
            <person name="Eisen J.A."/>
        </authorList>
    </citation>
    <scope>NUCLEOTIDE SEQUENCE [LARGE SCALE GENOMIC DNA]</scope>
    <source>
        <strain>ATCC 33009 / NCIMB 11132 / Bath</strain>
    </source>
</reference>
<dbReference type="EMBL" id="AE017282">
    <property type="protein sequence ID" value="AAU91474.1"/>
    <property type="molecule type" value="Genomic_DNA"/>
</dbReference>
<dbReference type="RefSeq" id="WP_010961589.1">
    <property type="nucleotide sequence ID" value="NC_002977.6"/>
</dbReference>
<dbReference type="SMR" id="Q605C3"/>
<dbReference type="STRING" id="243233.MCA2361"/>
<dbReference type="GeneID" id="88224563"/>
<dbReference type="KEGG" id="mca:MCA2361"/>
<dbReference type="eggNOG" id="COG0198">
    <property type="taxonomic scope" value="Bacteria"/>
</dbReference>
<dbReference type="HOGENOM" id="CLU_093315_2_2_6"/>
<dbReference type="Proteomes" id="UP000006821">
    <property type="component" value="Chromosome"/>
</dbReference>
<dbReference type="GO" id="GO:1990904">
    <property type="term" value="C:ribonucleoprotein complex"/>
    <property type="evidence" value="ECO:0007669"/>
    <property type="project" value="UniProtKB-KW"/>
</dbReference>
<dbReference type="GO" id="GO:0005840">
    <property type="term" value="C:ribosome"/>
    <property type="evidence" value="ECO:0007669"/>
    <property type="project" value="UniProtKB-KW"/>
</dbReference>
<dbReference type="GO" id="GO:0019843">
    <property type="term" value="F:rRNA binding"/>
    <property type="evidence" value="ECO:0007669"/>
    <property type="project" value="UniProtKB-UniRule"/>
</dbReference>
<dbReference type="GO" id="GO:0003735">
    <property type="term" value="F:structural constituent of ribosome"/>
    <property type="evidence" value="ECO:0007669"/>
    <property type="project" value="InterPro"/>
</dbReference>
<dbReference type="GO" id="GO:0006412">
    <property type="term" value="P:translation"/>
    <property type="evidence" value="ECO:0007669"/>
    <property type="project" value="UniProtKB-UniRule"/>
</dbReference>
<dbReference type="CDD" id="cd06089">
    <property type="entry name" value="KOW_RPL26"/>
    <property type="match status" value="1"/>
</dbReference>
<dbReference type="FunFam" id="2.30.30.30:FF:000004">
    <property type="entry name" value="50S ribosomal protein L24"/>
    <property type="match status" value="1"/>
</dbReference>
<dbReference type="Gene3D" id="2.30.30.30">
    <property type="match status" value="1"/>
</dbReference>
<dbReference type="HAMAP" id="MF_01326_B">
    <property type="entry name" value="Ribosomal_uL24_B"/>
    <property type="match status" value="1"/>
</dbReference>
<dbReference type="InterPro" id="IPR005824">
    <property type="entry name" value="KOW"/>
</dbReference>
<dbReference type="InterPro" id="IPR014722">
    <property type="entry name" value="Rib_uL2_dom2"/>
</dbReference>
<dbReference type="InterPro" id="IPR003256">
    <property type="entry name" value="Ribosomal_uL24"/>
</dbReference>
<dbReference type="InterPro" id="IPR005825">
    <property type="entry name" value="Ribosomal_uL24_CS"/>
</dbReference>
<dbReference type="InterPro" id="IPR041988">
    <property type="entry name" value="Ribosomal_uL24_KOW"/>
</dbReference>
<dbReference type="InterPro" id="IPR008991">
    <property type="entry name" value="Translation_prot_SH3-like_sf"/>
</dbReference>
<dbReference type="NCBIfam" id="TIGR01079">
    <property type="entry name" value="rplX_bact"/>
    <property type="match status" value="1"/>
</dbReference>
<dbReference type="PANTHER" id="PTHR12903">
    <property type="entry name" value="MITOCHONDRIAL RIBOSOMAL PROTEIN L24"/>
    <property type="match status" value="1"/>
</dbReference>
<dbReference type="Pfam" id="PF00467">
    <property type="entry name" value="KOW"/>
    <property type="match status" value="1"/>
</dbReference>
<dbReference type="Pfam" id="PF17136">
    <property type="entry name" value="ribosomal_L24"/>
    <property type="match status" value="1"/>
</dbReference>
<dbReference type="SMART" id="SM00739">
    <property type="entry name" value="KOW"/>
    <property type="match status" value="1"/>
</dbReference>
<dbReference type="SUPFAM" id="SSF50104">
    <property type="entry name" value="Translation proteins SH3-like domain"/>
    <property type="match status" value="1"/>
</dbReference>
<dbReference type="PROSITE" id="PS01108">
    <property type="entry name" value="RIBOSOMAL_L24"/>
    <property type="match status" value="1"/>
</dbReference>